<organism>
    <name type="scientific">Rotavirus B (isolate RVB/Rat/United States/IDIR/1984/G1P[X])</name>
    <name type="common">RV-B</name>
    <name type="synonym">Rotavirus B (isolate infectious diarrhea of infant rats)</name>
    <dbReference type="NCBI Taxonomy" id="28877"/>
    <lineage>
        <taxon>Viruses</taxon>
        <taxon>Riboviria</taxon>
        <taxon>Orthornavirae</taxon>
        <taxon>Duplornaviricota</taxon>
        <taxon>Resentoviricetes</taxon>
        <taxon>Reovirales</taxon>
        <taxon>Sedoreoviridae</taxon>
        <taxon>Rotavirus</taxon>
        <taxon>Rotavirus B</taxon>
    </lineage>
</organism>
<feature type="chain" id="PRO_0000369855" description="Non-structural protein 1, peptide 1">
    <location>
        <begin position="1"/>
        <end position="115"/>
    </location>
</feature>
<feature type="transmembrane region" description="Helical" evidence="1">
    <location>
        <begin position="39"/>
        <end position="59"/>
    </location>
</feature>
<sequence length="115" mass="12845">MGNRQSSAQLNSHLTQISSQHSNLYISDSKTSTFQTQHIILVAGVGIIVALFILLVCSCVLNCYLCNKFKRENGIQSISKRSLRQSRPSPNLYVQPVMQSNPFIKEARESICSEV</sequence>
<dbReference type="EMBL" id="U01164">
    <property type="protein sequence ID" value="AAA60454.1"/>
    <property type="molecule type" value="Genomic_RNA"/>
</dbReference>
<dbReference type="PIR" id="A49810">
    <property type="entry name" value="A49810"/>
</dbReference>
<dbReference type="GO" id="GO:0033644">
    <property type="term" value="C:host cell membrane"/>
    <property type="evidence" value="ECO:0007669"/>
    <property type="project" value="UniProtKB-SubCell"/>
</dbReference>
<dbReference type="GO" id="GO:0016020">
    <property type="term" value="C:membrane"/>
    <property type="evidence" value="ECO:0007669"/>
    <property type="project" value="UniProtKB-KW"/>
</dbReference>
<keyword id="KW-1043">Host membrane</keyword>
<keyword id="KW-0472">Membrane</keyword>
<keyword id="KW-0812">Transmembrane</keyword>
<keyword id="KW-1133">Transmembrane helix</keyword>
<organismHost>
    <name type="scientific">Homo sapiens</name>
    <name type="common">Human</name>
    <dbReference type="NCBI Taxonomy" id="9606"/>
</organismHost>
<organismHost>
    <name type="scientific">Rattus norvegicus</name>
    <name type="common">Rat</name>
    <dbReference type="NCBI Taxonomy" id="10116"/>
</organismHost>
<protein>
    <recommendedName>
        <fullName>Non-structural protein 1, peptide 1</fullName>
        <shortName>NSP1 peptide 1</shortName>
    </recommendedName>
    <alternativeName>
        <fullName>NSP1-1</fullName>
    </alternativeName>
</protein>
<accession>Q86516</accession>
<reference key="1">
    <citation type="journal article" date="1994" name="Virology">
        <title>Expression and sequence analysis of gene 7 of the IDIR agent (group B rotavirus): similarity with NS53 of group A rotavirus.</title>
        <authorList>
            <person name="Eiden J.J."/>
        </authorList>
    </citation>
    <scope>NUCLEOTIDE SEQUENCE [GENOMIC RNA]</scope>
</reference>
<name>NSP1A_ROTGI</name>
<evidence type="ECO:0000255" key="1"/>
<evidence type="ECO:0000305" key="2"/>
<comment type="subcellular location">
    <subcellularLocation>
        <location evidence="2">Host membrane</location>
        <topology evidence="2">Single-pass membrane protein</topology>
    </subcellularLocation>
</comment>
<comment type="similarity">
    <text evidence="2">Belongs to the rotavirus B NSP1-1 family.</text>
</comment>
<proteinExistence type="inferred from homology"/>